<comment type="function">
    <text evidence="1 3 10 11">Catalyzes the deacetylation of N-acetylglucosamine (GlcNAc) residues in peptidoglycan (PG). Also deacetylates N-acetylated PG. Does not deacetylate N-acetylmuramic acid (By similarity). Confers host lysozyme resistance. Critical for virulence and escape from innate immune response of the host (PubMed:21768286, PubMed:25157076). Required for intracellular survival of bacteria in macrophages of the host. Required for successful host colonization. Controls the production of inflammatory mediators in the bone marrow derived macrophages (BMMs) of the infected mouse (PubMed:21768286). Suppresses Toll-like receptor 2 (TLR2)-dependent secretion of interleukin 6 (IL-6) and interferon-beta (IFN-beta) in the macrophages of the infected mouse. May decrease accessibility of pattern recognition receptors (PRRs) such as nucleotide-binding oligomerization domain protein (NOD) 1 of the host to the bacterial cell wall components (By similarity). Protects cells from autolysis induced by lysozyme or by other autolysis-inducing agents (By similarity).</text>
</comment>
<comment type="catalytic activity">
    <reaction evidence="1">
        <text>peptidoglycan-N-acetyl-D-glucosamine + H2O = peptidoglycan-D-glucosamine + acetate.</text>
        <dbReference type="EC" id="3.5.1.104"/>
    </reaction>
</comment>
<comment type="cofactor">
    <cofactor evidence="2">
        <name>Zn(2+)</name>
        <dbReference type="ChEBI" id="CHEBI:29105"/>
    </cofactor>
</comment>
<comment type="subunit">
    <text evidence="3">Homodimer. Interacts (via transmembrane domain) with PbpA1 (via transmembrane domain); the interaction is important for the peptidoglycan N-deacetylase function of this protein.</text>
</comment>
<comment type="subcellular location">
    <subcellularLocation>
        <location evidence="3">Cell membrane</location>
        <topology evidence="3 4">Single-pass membrane protein</topology>
        <orientation evidence="3">Extracellular side</orientation>
    </subcellularLocation>
    <subcellularLocation>
        <location evidence="1">Secreted</location>
        <location evidence="1">Cell wall</location>
    </subcellularLocation>
</comment>
<comment type="induction">
    <text evidence="11">Transcriptionally up-regulated by response regulator DegU and abundant non-coding RNA encoded by rli31.</text>
</comment>
<comment type="disruption phenotype">
    <text evidence="10 11">Cells lacking this gene have increased lysozyme sensitivity (PubMed:21768286, PubMed:25157076). The growth is inhibited by 100 ug/ml hen egg white lysozyme in broth culture and the optical density of the culture is decreased, indicative of bacteriolysis. Bacterial colony-forming unit (CFU) is decreased by 2 logs in the liver and spleen of the intravenously Listeria-infected mouse. Mutant bacterial cells have intracellular growth defects in the bone marrow derived macrophages (BMMs) of the infected mouse, and increased vacuolar and cytosolic expression of cytokines interleukin 12 (IL-12), IL-1 beta and IFN-beta by the BMMs. Mutant cells undergo increased bacteriolysis in the cytosol of the BMMs leading to IL-1 beta secretion and AIM2 inflammasome-dependent pyroptosis of the infected host macrophages via the PYCARD (ASC)-dependent pathway. Double pgdA/oatA deletion mutants are more lysozyme sensitive than the single deletion mutant of this gene. Both the single and double mutant phenotypes can be rescued by lysozyme-deficient macrophages. The addition of extracellular lysozyme to the lysozyme-deficient macrophages infected by the mutants restores normal function of the BMMs (PubMed:21768286). Exhibits attenuated virulence in mice. Killed within 30 minutes of intravenous infection in the blood of infected mice. Is as resistant as wild-type bacteria to beta-lactam antibiotics cefuroxime and penicillin G, and to and cathelin-related antimicrobial peptide (CAMP) treatment. Not killed by antimicrobial cationic peptides (PubMed:25157076).</text>
</comment>
<proteinExistence type="evidence at transcript level"/>
<reference key="1">
    <citation type="submission" date="2010-04" db="EMBL/GenBank/DDBJ databases">
        <title>The genome sequence of Listeria monocytogenes strain 10403S.</title>
        <authorList>
            <consortium name="The Broad Institute Genome Sequencing Platform"/>
            <consortium name="The Broad Institute Genome Sequencing Center for Infectious Disease"/>
            <person name="Borowsky M."/>
            <person name="Borodovsky M."/>
            <person name="Young S.K."/>
            <person name="Zeng Q."/>
            <person name="Koehrsen M."/>
            <person name="Fitzgerald M."/>
            <person name="Wiedmann M."/>
            <person name="Swaminathan B."/>
            <person name="Lauer P."/>
            <person name="Portnoy D."/>
            <person name="Cossart P."/>
            <person name="Buchrieser C."/>
            <person name="Higgins D."/>
            <person name="Abouelleil A."/>
            <person name="Alvarado L."/>
            <person name="Arachchi H.M."/>
            <person name="Berlin A."/>
            <person name="Borenstein D."/>
            <person name="Brown A."/>
            <person name="Chapman S.B."/>
            <person name="Chen Z."/>
            <person name="Dunbar C.D."/>
            <person name="Engels R."/>
            <person name="Freedman E."/>
            <person name="Gearin G."/>
            <person name="Gellesch M."/>
            <person name="Goldberg J."/>
            <person name="Griggs A."/>
            <person name="Gujja S."/>
            <person name="Heilman E."/>
            <person name="Heiman D."/>
            <person name="Howarth C."/>
            <person name="Jen D."/>
            <person name="Larson L."/>
            <person name="Lui A."/>
            <person name="MacDonald J."/>
            <person name="Mehta T."/>
            <person name="Montmayeur A."/>
            <person name="Neiman D."/>
            <person name="Park D."/>
            <person name="Pearson M."/>
            <person name="Priest M."/>
            <person name="Richards J."/>
            <person name="Roberts A."/>
            <person name="Saif S."/>
            <person name="Shea T."/>
            <person name="Shenoy N."/>
            <person name="Sisk P."/>
            <person name="Stolte C."/>
            <person name="Sykes S."/>
            <person name="Walk T."/>
            <person name="White J."/>
            <person name="Yandava C."/>
            <person name="Haas B."/>
            <person name="Nusbaum C."/>
            <person name="Birren B."/>
        </authorList>
    </citation>
    <scope>NUCLEOTIDE SEQUENCE [LARGE SCALE GENOMIC DNA]</scope>
    <source>
        <strain>10403S</strain>
    </source>
</reference>
<reference key="2">
    <citation type="journal article" date="2011" name="Infect. Immun.">
        <title>Mutations of the Listeria monocytogenes peptidoglycan N-deacetylase and O-acetylase result in enhanced lysozyme sensitivity, bacteriolysis, and hyperinduction of innate immune pathways.</title>
        <authorList>
            <person name="Rae C.S."/>
            <person name="Geissler A."/>
            <person name="Adamson P.C."/>
            <person name="Portnoy D.A."/>
        </authorList>
    </citation>
    <scope>FUNCTION</scope>
    <scope>DISRUPTION PHENOTYPE</scope>
    <source>
        <strain evidence="12">10403S</strain>
    </source>
</reference>
<reference key="3">
    <citation type="journal article" date="2014" name="J. Bacteriol.">
        <title>Listeria monocytogenes is resistant to lysozyme through the regulation, not the acquisition, of cell wall-modifying enzymes.</title>
        <authorList>
            <person name="Burke T.P."/>
            <person name="Loukitcheva A."/>
            <person name="Zemansky J."/>
            <person name="Wheeler R."/>
            <person name="Boneca I.G."/>
            <person name="Portnoy D.A."/>
        </authorList>
    </citation>
    <scope>FUNCTION</scope>
    <scope>INDUCTION</scope>
    <scope>DISRUPTION PHENOTYPE</scope>
    <source>
        <strain evidence="13">10403S</strain>
    </source>
</reference>
<dbReference type="EC" id="3.5.1.104" evidence="1"/>
<dbReference type="EMBL" id="CP002002">
    <property type="protein sequence ID" value="AEO05427.1"/>
    <property type="molecule type" value="Genomic_DNA"/>
</dbReference>
<dbReference type="RefSeq" id="WP_003733946.1">
    <property type="nucleotide sequence ID" value="NC_017544.1"/>
</dbReference>
<dbReference type="SMR" id="A0A0H3GDH9"/>
<dbReference type="KEGG" id="lmt:LMRG_00107"/>
<dbReference type="HOGENOM" id="CLU_037608_1_1_9"/>
<dbReference type="Proteomes" id="UP000001288">
    <property type="component" value="Chromosome"/>
</dbReference>
<dbReference type="GO" id="GO:0005576">
    <property type="term" value="C:extracellular region"/>
    <property type="evidence" value="ECO:0007669"/>
    <property type="project" value="UniProtKB-KW"/>
</dbReference>
<dbReference type="GO" id="GO:0009275">
    <property type="term" value="C:Gram-positive-bacterium-type cell wall"/>
    <property type="evidence" value="ECO:0000250"/>
    <property type="project" value="UniProtKB"/>
</dbReference>
<dbReference type="GO" id="GO:0005886">
    <property type="term" value="C:plasma membrane"/>
    <property type="evidence" value="ECO:0007669"/>
    <property type="project" value="UniProtKB-SubCell"/>
</dbReference>
<dbReference type="GO" id="GO:0060241">
    <property type="term" value="F:lysozyme inhibitor activity"/>
    <property type="evidence" value="ECO:0000315"/>
    <property type="project" value="UniProtKB"/>
</dbReference>
<dbReference type="GO" id="GO:0050119">
    <property type="term" value="F:N-acetylglucosamine deacetylase activity"/>
    <property type="evidence" value="ECO:0000250"/>
    <property type="project" value="UniProtKB"/>
</dbReference>
<dbReference type="GO" id="GO:0042803">
    <property type="term" value="F:protein homodimerization activity"/>
    <property type="evidence" value="ECO:0000250"/>
    <property type="project" value="UniProtKB"/>
</dbReference>
<dbReference type="GO" id="GO:0008270">
    <property type="term" value="F:zinc ion binding"/>
    <property type="evidence" value="ECO:0000250"/>
    <property type="project" value="UniProtKB"/>
</dbReference>
<dbReference type="GO" id="GO:0001896">
    <property type="term" value="P:autolysis"/>
    <property type="evidence" value="ECO:0000250"/>
    <property type="project" value="UniProtKB"/>
</dbReference>
<dbReference type="GO" id="GO:0005975">
    <property type="term" value="P:carbohydrate metabolic process"/>
    <property type="evidence" value="ECO:0007669"/>
    <property type="project" value="InterPro"/>
</dbReference>
<dbReference type="GO" id="GO:0042545">
    <property type="term" value="P:cell wall modification"/>
    <property type="evidence" value="ECO:0000250"/>
    <property type="project" value="UniProtKB"/>
</dbReference>
<dbReference type="GO" id="GO:0042783">
    <property type="term" value="P:symbiont-mediated evasion of host immune response"/>
    <property type="evidence" value="ECO:0000315"/>
    <property type="project" value="UniProtKB"/>
</dbReference>
<dbReference type="GO" id="GO:0141043">
    <property type="term" value="P:symbiont-mediated evasion of host innate immune response"/>
    <property type="evidence" value="ECO:0000315"/>
    <property type="project" value="UniProtKB"/>
</dbReference>
<dbReference type="CDD" id="cd10954">
    <property type="entry name" value="CE4_CtAXE_like"/>
    <property type="match status" value="1"/>
</dbReference>
<dbReference type="Gene3D" id="3.20.20.370">
    <property type="entry name" value="Glycoside hydrolase/deacetylase"/>
    <property type="match status" value="1"/>
</dbReference>
<dbReference type="InterPro" id="IPR011330">
    <property type="entry name" value="Glyco_hydro/deAcase_b/a-brl"/>
</dbReference>
<dbReference type="InterPro" id="IPR002509">
    <property type="entry name" value="NODB_dom"/>
</dbReference>
<dbReference type="InterPro" id="IPR017219">
    <property type="entry name" value="Peptidoglycan_deacetylase"/>
</dbReference>
<dbReference type="InterPro" id="IPR050248">
    <property type="entry name" value="Polysacc_deacetylase_ArnD"/>
</dbReference>
<dbReference type="PANTHER" id="PTHR10587:SF133">
    <property type="entry name" value="CHITIN DEACETYLASE 1-RELATED"/>
    <property type="match status" value="1"/>
</dbReference>
<dbReference type="PANTHER" id="PTHR10587">
    <property type="entry name" value="GLYCOSYL TRANSFERASE-RELATED"/>
    <property type="match status" value="1"/>
</dbReference>
<dbReference type="Pfam" id="PF01522">
    <property type="entry name" value="Polysacc_deac_1"/>
    <property type="match status" value="1"/>
</dbReference>
<dbReference type="PIRSF" id="PIRSF037479">
    <property type="entry name" value="PG_GlcNAc_deacetylase"/>
    <property type="match status" value="1"/>
</dbReference>
<dbReference type="SUPFAM" id="SSF88713">
    <property type="entry name" value="Glycoside hydrolase/deacetylase"/>
    <property type="match status" value="1"/>
</dbReference>
<dbReference type="PROSITE" id="PS51677">
    <property type="entry name" value="NODB"/>
    <property type="match status" value="1"/>
</dbReference>
<organism>
    <name type="scientific">Listeria monocytogenes serotype 1/2a (strain 10403S)</name>
    <dbReference type="NCBI Taxonomy" id="393133"/>
    <lineage>
        <taxon>Bacteria</taxon>
        <taxon>Bacillati</taxon>
        <taxon>Bacillota</taxon>
        <taxon>Bacilli</taxon>
        <taxon>Bacillales</taxon>
        <taxon>Listeriaceae</taxon>
        <taxon>Listeria</taxon>
    </lineage>
</organism>
<keyword id="KW-1003">Cell membrane</keyword>
<keyword id="KW-0134">Cell wall</keyword>
<keyword id="KW-0378">Hydrolase</keyword>
<keyword id="KW-0472">Membrane</keyword>
<keyword id="KW-0479">Metal-binding</keyword>
<keyword id="KW-0964">Secreted</keyword>
<keyword id="KW-0812">Transmembrane</keyword>
<keyword id="KW-1133">Transmembrane helix</keyword>
<keyword id="KW-0843">Virulence</keyword>
<keyword id="KW-0862">Zinc</keyword>
<feature type="chain" id="PRO_0000452092" description="Peptidoglycan-N-acetylglucosamine deacetylase PgdA">
    <location>
        <begin position="1"/>
        <end position="466"/>
    </location>
</feature>
<feature type="topological domain" description="Cytoplasmic" evidence="14">
    <location>
        <begin position="1"/>
        <end position="5"/>
    </location>
</feature>
<feature type="transmembrane region" description="Helical" evidence="4">
    <location>
        <begin position="6"/>
        <end position="26"/>
    </location>
</feature>
<feature type="topological domain" description="Extracellular" evidence="14">
    <location>
        <begin position="27"/>
        <end position="466"/>
    </location>
</feature>
<feature type="domain" description="NodB homology" evidence="9">
    <location>
        <begin position="266"/>
        <end position="440"/>
    </location>
</feature>
<feature type="active site" description="Proton acceptor" evidence="5 9">
    <location>
        <position position="273"/>
    </location>
</feature>
<feature type="active site" description="Proton donor" evidence="5 9">
    <location>
        <position position="415"/>
    </location>
</feature>
<feature type="binding site" evidence="7">
    <location>
        <position position="274"/>
    </location>
    <ligand>
        <name>Zn(2+)</name>
        <dbReference type="ChEBI" id="CHEBI:29105"/>
    </ligand>
</feature>
<feature type="binding site" evidence="7">
    <location>
        <position position="324"/>
    </location>
    <ligand>
        <name>Zn(2+)</name>
        <dbReference type="ChEBI" id="CHEBI:29105"/>
    </ligand>
</feature>
<feature type="binding site" evidence="7">
    <location>
        <position position="328"/>
    </location>
    <ligand>
        <name>Zn(2+)</name>
        <dbReference type="ChEBI" id="CHEBI:29105"/>
    </ligand>
</feature>
<feature type="binding site" evidence="6">
    <location>
        <position position="365"/>
    </location>
    <ligand>
        <name>substrate</name>
    </ligand>
</feature>
<feature type="site" description="Raises pKa of active site His" evidence="8">
    <location>
        <position position="389"/>
    </location>
</feature>
<gene>
    <name evidence="13" type="primary">pgdA</name>
    <name evidence="15" type="ordered locus">LMRG_00107</name>
</gene>
<name>PGDA_LISM4</name>
<accession>A0A0H3GDH9</accession>
<sequence length="466" mass="52496">MKIRWIRLSLVAILIIAVVFIGVIGFQKYQFSKSRNKVIMQMDRLMKDQDGGNFRRLDKKENGVEIISYIPKTTEKKDNEIIQKEIGKATDAEVKKLNRDKETQGIIFYTYQKHRMAEQAISYKAVQSEYVKEGRTKFVLKDKKDICKNIVTDAETGALLTLGEVLIKSNQTKLNLKTAVEEELIKTGDFSLKDVGNLGKIKSLVKWNQTDFEITNSEIILPVKIPGAPEPKKVKVKLADIASSVNKRYLPSSVKVPEVPKAKTNKRIALTFDDGPSSSVTPGVLDTLKRHNVKATFFVLGSSVIQNPGLVKRELEEGHQVGSHSWDHPQLTKQSTQEVYNQILKTQKAVFDQTGYFPTTMRPPYGAVNKQVAEEIGLPIIQWSVDTEDWKYRNAGIVTKKVLAGATDGAIVLMHDIHKTTAASLDTTLTKLKSQGYEFVTIDELYGEKLQIGKQYFDKTDSRMVK</sequence>
<evidence type="ECO:0000250" key="1">
    <source>
        <dbReference type="UniProtKB" id="A0A3Q0NBH7"/>
    </source>
</evidence>
<evidence type="ECO:0000250" key="2">
    <source>
        <dbReference type="UniProtKB" id="Q8DP63"/>
    </source>
</evidence>
<evidence type="ECO:0000250" key="3">
    <source>
        <dbReference type="UniProtKB" id="Q8Y9V5"/>
    </source>
</evidence>
<evidence type="ECO:0000255" key="4"/>
<evidence type="ECO:0000255" key="5">
    <source>
        <dbReference type="PIRSR" id="PIRSR037479-1"/>
    </source>
</evidence>
<evidence type="ECO:0000255" key="6">
    <source>
        <dbReference type="PIRSR" id="PIRSR037479-2"/>
    </source>
</evidence>
<evidence type="ECO:0000255" key="7">
    <source>
        <dbReference type="PIRSR" id="PIRSR037479-3"/>
    </source>
</evidence>
<evidence type="ECO:0000255" key="8">
    <source>
        <dbReference type="PIRSR" id="PIRSR037479-4"/>
    </source>
</evidence>
<evidence type="ECO:0000255" key="9">
    <source>
        <dbReference type="PROSITE-ProRule" id="PRU01014"/>
    </source>
</evidence>
<evidence type="ECO:0000269" key="10">
    <source>
    </source>
</evidence>
<evidence type="ECO:0000269" key="11">
    <source>
    </source>
</evidence>
<evidence type="ECO:0000303" key="12">
    <source>
    </source>
</evidence>
<evidence type="ECO:0000303" key="13">
    <source>
    </source>
</evidence>
<evidence type="ECO:0000305" key="14"/>
<evidence type="ECO:0000312" key="15">
    <source>
        <dbReference type="EMBL" id="AEO05427.1"/>
    </source>
</evidence>
<protein>
    <recommendedName>
        <fullName evidence="14">Peptidoglycan-N-acetylglucosamine deacetylase PgdA</fullName>
        <shortName evidence="14">Peptidoglycan GlcNAc deacetylase</shortName>
        <ecNumber evidence="1">3.5.1.104</ecNumber>
    </recommendedName>
    <alternativeName>
        <fullName evidence="12">N-acetylglucosamine deacetylase Pgd</fullName>
    </alternativeName>
    <alternativeName>
        <fullName evidence="12">Peptidoglycan N-deacetylase</fullName>
        <shortName evidence="14">PG N-deacetylase</shortName>
    </alternativeName>
    <alternativeName>
        <fullName evidence="13">Petptidoglycan deacetylase</fullName>
        <shortName evidence="14">PG deacetylase</shortName>
    </alternativeName>
</protein>